<sequence>MKIRLHTLLAVLTAAPLLLAAAGCGSKPPSGSPETGAGAGTVATTPASSPVTLAETGSTLLYPLFNLWGPAFHERYPNVTITAQGTGSGAGIAQAAAGTVNIGASDAYLSEGDMAAHKGLMNIALAISAQQVNYNLPGVSEHLKLNGKVLAAMYQGTIKTWDDPQIAALNPGVNLPGTAVVPLHRSDGSGDTFLFTQYLSKQDPEGWGKSPGFGTTVDFPAVPGALGENGNGGMVTGCAETPGCVAYIGISFLDQASQRGLGEAQLGNSSGNFLLPDAQSIQAAAAGFASKTPANQAISMIDGPAPDGYPIINYEYAIVNNRQKDAATAQTLQAFLHWAITDGNKASFLDQVHFQPLPPAVVKLSDALIATISS</sequence>
<gene>
    <name type="primary">pstS1</name>
    <name type="synonym">phoS1</name>
    <name type="ordered locus">Rv0934</name>
    <name type="ORF">MTCY08D9.05c</name>
</gene>
<name>PSTS1_MYCTU</name>
<dbReference type="EMBL" id="M30046">
    <property type="protein sequence ID" value="AAA25374.1"/>
    <property type="molecule type" value="Genomic_DNA"/>
</dbReference>
<dbReference type="EMBL" id="AL123456">
    <property type="protein sequence ID" value="CCP43682.1"/>
    <property type="molecule type" value="Genomic_DNA"/>
</dbReference>
<dbReference type="PIR" id="F70584">
    <property type="entry name" value="F70584"/>
</dbReference>
<dbReference type="RefSeq" id="YP_177770.1">
    <property type="nucleotide sequence ID" value="NC_000962.3"/>
</dbReference>
<dbReference type="PDB" id="1PC3">
    <property type="method" value="X-ray"/>
    <property type="resolution" value="2.16 A"/>
    <property type="chains" value="A/B=25-374"/>
</dbReference>
<dbReference type="PDB" id="7DM1">
    <property type="method" value="X-ray"/>
    <property type="resolution" value="2.10 A"/>
    <property type="chains" value="A/B=25-374"/>
</dbReference>
<dbReference type="PDB" id="7DM2">
    <property type="method" value="X-ray"/>
    <property type="resolution" value="2.40 A"/>
    <property type="chains" value="A=25-374"/>
</dbReference>
<dbReference type="PDBsum" id="1PC3"/>
<dbReference type="PDBsum" id="7DM1"/>
<dbReference type="PDBsum" id="7DM2"/>
<dbReference type="SMR" id="P9WGU1"/>
<dbReference type="FunCoup" id="P9WGU1">
    <property type="interactions" value="139"/>
</dbReference>
<dbReference type="STRING" id="83332.Rv0934"/>
<dbReference type="PaxDb" id="83332-Rv0934"/>
<dbReference type="ABCD" id="P9WGU1">
    <property type="antibodies" value="4 sequenced antibodies"/>
</dbReference>
<dbReference type="DNASU" id="885724"/>
<dbReference type="GeneID" id="885724"/>
<dbReference type="KEGG" id="mtu:Rv0934"/>
<dbReference type="KEGG" id="mtv:RVBD_0934"/>
<dbReference type="TubercuList" id="Rv0934"/>
<dbReference type="eggNOG" id="COG0226">
    <property type="taxonomic scope" value="Bacteria"/>
</dbReference>
<dbReference type="InParanoid" id="P9WGU1"/>
<dbReference type="OrthoDB" id="9801510at2"/>
<dbReference type="PhylomeDB" id="P9WGU1"/>
<dbReference type="Reactome" id="R-HSA-9637628">
    <property type="pathway name" value="Modulation by Mtb of host immune system"/>
</dbReference>
<dbReference type="EvolutionaryTrace" id="P9WGU1"/>
<dbReference type="Proteomes" id="UP000001584">
    <property type="component" value="Chromosome"/>
</dbReference>
<dbReference type="GO" id="GO:0043190">
    <property type="term" value="C:ATP-binding cassette (ABC) transporter complex"/>
    <property type="evidence" value="ECO:0007669"/>
    <property type="project" value="InterPro"/>
</dbReference>
<dbReference type="GO" id="GO:0009986">
    <property type="term" value="C:cell surface"/>
    <property type="evidence" value="ECO:0007669"/>
    <property type="project" value="UniProtKB-SubCell"/>
</dbReference>
<dbReference type="GO" id="GO:0005829">
    <property type="term" value="C:cytosol"/>
    <property type="evidence" value="ECO:0007005"/>
    <property type="project" value="MTBBASE"/>
</dbReference>
<dbReference type="GO" id="GO:0005576">
    <property type="term" value="C:extracellular region"/>
    <property type="evidence" value="ECO:0007005"/>
    <property type="project" value="MTBBASE"/>
</dbReference>
<dbReference type="GO" id="GO:0009274">
    <property type="term" value="C:peptidoglycan-based cell wall"/>
    <property type="evidence" value="ECO:0000314"/>
    <property type="project" value="MTBBASE"/>
</dbReference>
<dbReference type="GO" id="GO:0005886">
    <property type="term" value="C:plasma membrane"/>
    <property type="evidence" value="ECO:0000314"/>
    <property type="project" value="MTBBASE"/>
</dbReference>
<dbReference type="GO" id="GO:0042301">
    <property type="term" value="F:phosphate ion binding"/>
    <property type="evidence" value="ECO:0000314"/>
    <property type="project" value="MTBBASE"/>
</dbReference>
<dbReference type="GO" id="GO:0007155">
    <property type="term" value="P:cell adhesion"/>
    <property type="evidence" value="ECO:0007669"/>
    <property type="project" value="UniProtKB-KW"/>
</dbReference>
<dbReference type="GO" id="GO:0016036">
    <property type="term" value="P:cellular response to phosphate starvation"/>
    <property type="evidence" value="ECO:0000270"/>
    <property type="project" value="MTBBASE"/>
</dbReference>
<dbReference type="GO" id="GO:0035435">
    <property type="term" value="P:phosphate ion transmembrane transport"/>
    <property type="evidence" value="ECO:0007669"/>
    <property type="project" value="InterPro"/>
</dbReference>
<dbReference type="GO" id="GO:0006817">
    <property type="term" value="P:phosphate ion transport"/>
    <property type="evidence" value="ECO:0000315"/>
    <property type="project" value="MTBBASE"/>
</dbReference>
<dbReference type="CDD" id="cd01006">
    <property type="entry name" value="PBP2_phosphate_binding"/>
    <property type="match status" value="1"/>
</dbReference>
<dbReference type="FunFam" id="3.40.190.10:FF:000235">
    <property type="entry name" value="Phosphate-binding protein PstS"/>
    <property type="match status" value="1"/>
</dbReference>
<dbReference type="Gene3D" id="3.40.190.10">
    <property type="entry name" value="Periplasmic binding protein-like II"/>
    <property type="match status" value="2"/>
</dbReference>
<dbReference type="InterPro" id="IPR005673">
    <property type="entry name" value="ABC_phos-bd_PstS"/>
</dbReference>
<dbReference type="InterPro" id="IPR024370">
    <property type="entry name" value="PBP_domain"/>
</dbReference>
<dbReference type="InterPro" id="IPR050962">
    <property type="entry name" value="Phosphate-bind_PstS"/>
</dbReference>
<dbReference type="NCBIfam" id="TIGR00975">
    <property type="entry name" value="3a0107s03"/>
    <property type="match status" value="1"/>
</dbReference>
<dbReference type="PANTHER" id="PTHR42996">
    <property type="entry name" value="PHOSPHATE-BINDING PROTEIN PSTS"/>
    <property type="match status" value="1"/>
</dbReference>
<dbReference type="PANTHER" id="PTHR42996:SF1">
    <property type="entry name" value="PHOSPHATE-BINDING PROTEIN PSTS"/>
    <property type="match status" value="1"/>
</dbReference>
<dbReference type="Pfam" id="PF12849">
    <property type="entry name" value="PBP_like_2"/>
    <property type="match status" value="1"/>
</dbReference>
<dbReference type="PIRSF" id="PIRSF002756">
    <property type="entry name" value="PstS"/>
    <property type="match status" value="1"/>
</dbReference>
<dbReference type="SUPFAM" id="SSF53850">
    <property type="entry name" value="Periplasmic binding protein-like II"/>
    <property type="match status" value="1"/>
</dbReference>
<dbReference type="PROSITE" id="PS51257">
    <property type="entry name" value="PROKAR_LIPOPROTEIN"/>
    <property type="match status" value="1"/>
</dbReference>
<comment type="function">
    <text evidence="4 5 11 15 20">Functions in inorganic phosphate uptake, although probably not the main uptake protein under phosphate starvation (PubMed:15731097, PubMed:20933472). Binds phosphate; probably able to bind both H(2)PO(4)(-) and HPO(4)(2-) (PubMed:12842040, PubMed:8294447). Part of the ABC transporter complex PstSACB involved in phosphate import (Probable).</text>
</comment>
<comment type="function">
    <text evidence="7 8 9 10 13 14">A host TLR2 agonist (toll-like receptor), shown experimentally for human and mouse (PubMed:1906192, PubMed:19362712). Requires both host TLR1 and TLR2 as coreceptors to elicit host response in mouse (TLR6 may also play a role) neither CD14 or CD36 function as accessory receptors (PubMed:19362712). Protein purified from culture filtrate induces host (human) monocytes to produce TNF-alpha, IL-6 and IL-12 p40 (IL12B) via ERK1/2 (MAPK3 and MAPK1) and p38 MAPK pathways; MEK inhibitors U0126 and PD98059 and p38 inhibitor SB203580 block most cytokine production (PubMed:16622205). Host ERK1/2 and p38 MAPK activation is mediated mainly by TLR2, but also partially by TLR4, and unlike the case for lipoprotein LpqH the protein moiety of PstS1 seems to be the antigenic agent (PubMed:16622205). Greater activation of ERK1/2 and p38 MAPK is seen in patients with active pulmonary tuberculosis than in tuberculin-negative patients (PubMed:16622205). Induces apoptosis when incubated with human monocyte-derived macrophages via TLR2 (PubMed:19140873). Protein purified from culture filtrate acts via TLR2 and TLR4 to induce host macrophage (shown for mouse) endoplasmic reticulum stress-mediated apoptosis via MAPK (at least JNK), C-C motif chemokine 2 (MCP-1, Ccl2) and ZC3H12 endoribonucleases (MCPIP, Zc3h12) (PubMed:25544271). Functions as an adhesin, binds to human and mouse macrophages via mannose residues, binds to the mouse macrophage mannose receptor (possibly Mrc1) and mediates bacterial phagocytosis (PubMed:25359607).</text>
</comment>
<comment type="subunit">
    <text evidence="20">The ABC transporter complex is composed of two ATP-binding proteins (PstB), two transmembrane proteins (PstC and PstA) and a solute-binding protein (PstS).</text>
</comment>
<comment type="subcellular location">
    <subcellularLocation>
        <location evidence="20">Cell membrane</location>
        <topology evidence="22">Lipid-anchor</topology>
    </subcellularLocation>
    <subcellularLocation>
        <location evidence="6 13">Cell surface</location>
    </subcellularLocation>
    <subcellularLocation>
        <location evidence="3">Secreted</location>
        <location evidence="3">Cell wall</location>
    </subcellularLocation>
    <subcellularLocation>
        <location evidence="21 22">Secreted</location>
    </subcellularLocation>
    <text evidence="3 7 8">A soluble cell wall-associated protein (PubMed:10426995). Also found in culture filtrate in increasing quantities during growth (PubMed:16622205, PubMed:1906192).</text>
</comment>
<comment type="induction">
    <text evidence="6 11">Transcription slightly induced by phosphate starvation, part of the pstB3-pstS2-pstC1-pstA2 operon (PubMed:20933472). Strongly induced by phosphate starvation (at protein level) (PubMed:1612766). Also shown to be only slightly induced by phosphate starvation; results may depend on growth media (at protein level) (PubMed:20933472).</text>
</comment>
<comment type="PTM">
    <text evidence="13">Glycosylated, probably with mannose residues; treatment with alpha-D-mannosidase abolishes its interaction with concanavalin A.</text>
</comment>
<comment type="disruption phenotype">
    <text evidence="5 11">No growth phenotype in phosphate-rich medium (3.6 mM Pi), decreased phosphate uptake in phosphate-depleted medium (PubMed:15731097). Grows faster than wild-type in restricted (Sauton) phosphate-free medium, even after nutrient starvation (PubMed:20933472). Decreased growth in infected BALB/c and C57BL/6 mice for up to 5 months after infection (PubMed:15731097).</text>
</comment>
<comment type="biotechnology">
    <text evidence="12">When used as a vaccine has immunostimulatory properties; it stimulates the differentiation of unrelated antigen memory CD4+ T-cells to produce IFN-gamma, IL-17 and IL-22.</text>
</comment>
<comment type="similarity">
    <text evidence="20">Belongs to the PstS family.</text>
</comment>
<evidence type="ECO:0000255" key="1">
    <source>
        <dbReference type="PROSITE-ProRule" id="PRU00303"/>
    </source>
</evidence>
<evidence type="ECO:0000256" key="2">
    <source>
        <dbReference type="SAM" id="MobiDB-lite"/>
    </source>
</evidence>
<evidence type="ECO:0000269" key="3">
    <source>
    </source>
</evidence>
<evidence type="ECO:0000269" key="4">
    <source>
    </source>
</evidence>
<evidence type="ECO:0000269" key="5">
    <source>
    </source>
</evidence>
<evidence type="ECO:0000269" key="6">
    <source>
    </source>
</evidence>
<evidence type="ECO:0000269" key="7">
    <source>
    </source>
</evidence>
<evidence type="ECO:0000269" key="8">
    <source>
    </source>
</evidence>
<evidence type="ECO:0000269" key="9">
    <source>
    </source>
</evidence>
<evidence type="ECO:0000269" key="10">
    <source>
    </source>
</evidence>
<evidence type="ECO:0000269" key="11">
    <source>
    </source>
</evidence>
<evidence type="ECO:0000269" key="12">
    <source>
    </source>
</evidence>
<evidence type="ECO:0000269" key="13">
    <source>
    </source>
</evidence>
<evidence type="ECO:0000269" key="14">
    <source>
    </source>
</evidence>
<evidence type="ECO:0000269" key="15">
    <source>
    </source>
</evidence>
<evidence type="ECO:0000303" key="16">
    <source>
    </source>
</evidence>
<evidence type="ECO:0000303" key="17">
    <source>
    </source>
</evidence>
<evidence type="ECO:0000303" key="18">
    <source>
    </source>
</evidence>
<evidence type="ECO:0000303" key="19">
    <source>
    </source>
</evidence>
<evidence type="ECO:0000305" key="20"/>
<evidence type="ECO:0000305" key="21">
    <source>
    </source>
</evidence>
<evidence type="ECO:0000305" key="22">
    <source>
    </source>
</evidence>
<evidence type="ECO:0007829" key="23">
    <source>
        <dbReference type="PDB" id="7DM1"/>
    </source>
</evidence>
<reference key="1">
    <citation type="journal article" date="1989" name="Infect. Immun.">
        <title>Structure and mapping of antigenic domains of protein antigen b, a 38,000-molecular-weight protein of Mycobacterium tuberculosis.</title>
        <authorList>
            <person name="Andersen A.B."/>
            <person name="Hansen E.B."/>
        </authorList>
    </citation>
    <scope>NUCLEOTIDE SEQUENCE [GENOMIC DNA]</scope>
</reference>
<reference key="2">
    <citation type="journal article" date="1998" name="Nature">
        <title>Deciphering the biology of Mycobacterium tuberculosis from the complete genome sequence.</title>
        <authorList>
            <person name="Cole S.T."/>
            <person name="Brosch R."/>
            <person name="Parkhill J."/>
            <person name="Garnier T."/>
            <person name="Churcher C.M."/>
            <person name="Harris D.E."/>
            <person name="Gordon S.V."/>
            <person name="Eiglmeier K."/>
            <person name="Gas S."/>
            <person name="Barry C.E. III"/>
            <person name="Tekaia F."/>
            <person name="Badcock K."/>
            <person name="Basham D."/>
            <person name="Brown D."/>
            <person name="Chillingworth T."/>
            <person name="Connor R."/>
            <person name="Davies R.M."/>
            <person name="Devlin K."/>
            <person name="Feltwell T."/>
            <person name="Gentles S."/>
            <person name="Hamlin N."/>
            <person name="Holroyd S."/>
            <person name="Hornsby T."/>
            <person name="Jagels K."/>
            <person name="Krogh A."/>
            <person name="McLean J."/>
            <person name="Moule S."/>
            <person name="Murphy L.D."/>
            <person name="Oliver S."/>
            <person name="Osborne J."/>
            <person name="Quail M.A."/>
            <person name="Rajandream M.A."/>
            <person name="Rogers J."/>
            <person name="Rutter S."/>
            <person name="Seeger K."/>
            <person name="Skelton S."/>
            <person name="Squares S."/>
            <person name="Squares R."/>
            <person name="Sulston J.E."/>
            <person name="Taylor K."/>
            <person name="Whitehead S."/>
            <person name="Barrell B.G."/>
        </authorList>
    </citation>
    <scope>NUCLEOTIDE SEQUENCE [LARGE SCALE GENOMIC DNA]</scope>
    <source>
        <strain>ATCC 25618 / H37Rv</strain>
    </source>
</reference>
<reference key="3">
    <citation type="journal article" date="1991" name="Res. Microbiol.">
        <title>Lipoprotein antigens of Mycobacterium tuberculosis.</title>
        <authorList>
            <person name="Young D.B."/>
            <person name="Garbe T.R."/>
        </authorList>
    </citation>
    <scope>FUNCTION IN INFECTION</scope>
    <scope>SUBCELLULAR LOCATION</scope>
    <scope>PALMITOYLATION AT CYS-24</scope>
    <source>
        <strain>H37Rv</strain>
    </source>
</reference>
<reference key="4">
    <citation type="journal article" date="1994" name="J. Biol. Chem.">
        <title>The immunodominant 38-kDa lipoprotein antigen of Mycobacterium tuberculosis is a phosphate-binding protein.</title>
        <authorList>
            <person name="Chang Z."/>
            <person name="Choudhary A."/>
            <person name="Lathigra R."/>
            <person name="Quiocho F.A."/>
        </authorList>
    </citation>
    <scope>FUNCTION</scope>
    <scope>PHOSPHATE-BINDING</scope>
    <source>
        <strain>H37Rv</strain>
    </source>
</reference>
<reference key="5">
    <citation type="journal article" date="1992" name="Infect. Immun.">
        <title>Phosphate starvation enhances expression of the immunodominant 38-kilodalton protein antigen of Mycobacterium tuberculosis: demonstration by immunogold electron microscopy.</title>
        <authorList>
            <person name="Espitia C."/>
            <person name="Elinos M."/>
            <person name="Hernandez-Pando R."/>
            <person name="Mancilla R."/>
        </authorList>
    </citation>
    <scope>SUBCELLULAR LOCATION</scope>
    <scope>INDUCTION BY PHOSPHATE STARVATION</scope>
    <source>
        <strain>H37Rv</strain>
    </source>
</reference>
<reference key="6">
    <citation type="journal article" date="1999" name="Science">
        <title>Host defense mechanisms triggered by microbial lipoproteins through Toll-like receptors.</title>
        <authorList>
            <person name="Brightbill H.D."/>
            <person name="Libraty D.H."/>
            <person name="Krutzik S.R."/>
            <person name="Yang R.B."/>
            <person name="Belisle J.T."/>
            <person name="Bleharski J.R."/>
            <person name="Maitland M."/>
            <person name="Norgard M.V."/>
            <person name="Plevy S.E."/>
            <person name="Smale S.T."/>
            <person name="Brennan P.J."/>
            <person name="Bloom B.R."/>
            <person name="Godowski P.J."/>
            <person name="Modlin R.L."/>
        </authorList>
    </citation>
    <scope>SUBCELLULAR LOCATION</scope>
    <source>
        <strain>H37Rv</strain>
    </source>
</reference>
<reference key="7">
    <citation type="journal article" date="2005" name="Infect. Immun.">
        <title>Mycobacterium tuberculosis with disruption in genes encoding the phosphate binding proteins PstS1 and PstS2 is deficient in phosphate uptake and demonstrates reduced in vivo virulence.</title>
        <authorList>
            <person name="Peirs P."/>
            <person name="Lefevre P."/>
            <person name="Boarbi S."/>
            <person name="Wang X.M."/>
            <person name="Denis O."/>
            <person name="Braibant M."/>
            <person name="Pethe K."/>
            <person name="Locht C."/>
            <person name="Huygen K."/>
            <person name="Content J."/>
        </authorList>
    </citation>
    <scope>FUNCTION</scope>
    <scope>DISRUPTION PHENOTYPE</scope>
    <source>
        <strain>H37Rv</strain>
    </source>
</reference>
<reference key="8">
    <citation type="journal article" date="2006" name="Infect. Immun.">
        <title>The mycobacterial 38-kilodalton glycolipoprotein antigen activates the mitogen-activated protein kinase pathway and release of proinflammatory cytokines through Toll-like receptors 2 and 4 in human monocytes.</title>
        <authorList>
            <person name="Jung S.B."/>
            <person name="Yang C.S."/>
            <person name="Lee J.S."/>
            <person name="Shin A.R."/>
            <person name="Jung S.S."/>
            <person name="Son J.W."/>
            <person name="Harding C.V."/>
            <person name="Kim H.J."/>
            <person name="Park J.K."/>
            <person name="Paik T.H."/>
            <person name="Song C.H."/>
            <person name="Jo E.K."/>
        </authorList>
    </citation>
    <scope>FUNCTION IN INFECTION</scope>
    <scope>SUBCELLULAR LOCATION</scope>
    <source>
        <strain>ATCC 27294 / TMC 102 / H37Rv</strain>
    </source>
</reference>
<reference key="9">
    <citation type="journal article" date="2009" name="Scand. J. Immunol.">
        <title>Mycobacterium tuberculosis 38-kDa lipoprotein is apoptogenic for human monocyte-derived macrophages.</title>
        <authorList>
            <person name="Sanchez A."/>
            <person name="Espinosa P."/>
            <person name="Esparza M.A."/>
            <person name="Colon M."/>
            <person name="Bernal G."/>
            <person name="Mancilla R."/>
        </authorList>
    </citation>
    <scope>FUNCTION IN INFECTION</scope>
    <source>
        <strain>H37Rv</strain>
    </source>
</reference>
<reference key="10">
    <citation type="journal article" date="2009" name="Cell. Immunol.">
        <title>TLR2 and its co-receptors determine responses of macrophages and dendritic cells to lipoproteins of Mycobacterium tuberculosis.</title>
        <authorList>
            <person name="Drage M.G."/>
            <person name="Pecora N.D."/>
            <person name="Hise A.G."/>
            <person name="Febbraio M."/>
            <person name="Silverstein R.L."/>
            <person name="Golenbock D.T."/>
            <person name="Boom W.H."/>
            <person name="Harding C.V."/>
        </authorList>
    </citation>
    <scope>FUNCTION IN INFECTION</scope>
    <source>
        <strain>H37Rv</strain>
    </source>
</reference>
<reference key="11">
    <citation type="journal article" date="2010" name="Tuberculosis">
        <title>Effect of PstS sub-units or PknD deficiency on the survival of Mycobacterium tuberculosis.</title>
        <authorList>
            <person name="Vanzembergh F."/>
            <person name="Peirs P."/>
            <person name="Lefevre P."/>
            <person name="Celio N."/>
            <person name="Mathys V."/>
            <person name="Content J."/>
            <person name="Kalai M."/>
        </authorList>
    </citation>
    <scope>FUNCTION</scope>
    <scope>INDUCTION</scope>
    <scope>DISRUPTION PHENOTYPE</scope>
    <source>
        <strain>H37Rv</strain>
    </source>
</reference>
<reference key="12">
    <citation type="journal article" date="2011" name="Mol. Cell. Proteomics">
        <title>Proteogenomic analysis of Mycobacterium tuberculosis by high resolution mass spectrometry.</title>
        <authorList>
            <person name="Kelkar D.S."/>
            <person name="Kumar D."/>
            <person name="Kumar P."/>
            <person name="Balakrishnan L."/>
            <person name="Muthusamy B."/>
            <person name="Yadav A.K."/>
            <person name="Shrivastava P."/>
            <person name="Marimuthu A."/>
            <person name="Anand S."/>
            <person name="Sundaram H."/>
            <person name="Kingsbury R."/>
            <person name="Harsha H.C."/>
            <person name="Nair B."/>
            <person name="Prasad T.S."/>
            <person name="Chauhan D.S."/>
            <person name="Katoch K."/>
            <person name="Katoch V.M."/>
            <person name="Kumar P."/>
            <person name="Chaerkady R."/>
            <person name="Ramachandran S."/>
            <person name="Dash D."/>
            <person name="Pandey A."/>
        </authorList>
    </citation>
    <scope>IDENTIFICATION BY MASS SPECTROMETRY [LARGE SCALE ANALYSIS]</scope>
    <source>
        <strain>ATCC 25618 / H37Rv</strain>
    </source>
</reference>
<reference key="13">
    <citation type="journal article" date="2013" name="Eur. J. Immunol.">
        <title>Mycobacterium tuberculosis PstS1 amplifies IFN-gamma and induces IL-17/IL-22 responses by unrelated memory CD4+ T cells via dendritic cell activation.</title>
        <authorList>
            <person name="Palma C."/>
            <person name="Schiavoni G."/>
            <person name="Abalsamo L."/>
            <person name="Mattei F."/>
            <person name="Piccaro G."/>
            <person name="Sanchez M."/>
            <person name="Fernandez C."/>
            <person name="Singh M."/>
            <person name="Gabriele L."/>
        </authorList>
    </citation>
    <scope>BIOTECHNOLOGY</scope>
</reference>
<reference key="14">
    <citation type="journal article" date="2015" name="Scand. J. Immunol.">
        <title>PstS-1, the 38-kDa Mycobacterium tuberculosis glycoprotein, is an adhesin, which binds the macrophage mannose receptor and promotes phagocytosis.</title>
        <authorList>
            <person name="Esparza M."/>
            <person name="Palomares B."/>
            <person name="Garcia T."/>
            <person name="Espinosa P."/>
            <person name="Zenteno E."/>
            <person name="Mancilla R."/>
        </authorList>
    </citation>
    <scope>FUNCTION IN INFECTION</scope>
    <scope>SUBCELLULAR LOCATION</scope>
    <scope>GLYCOSYLATION</scope>
    <source>
        <strain>H37Rv</strain>
    </source>
</reference>
<reference key="15">
    <citation type="journal article" date="2015" name="Apoptosis">
        <title>Mycobacterium tuberculosis 38-kDa antigen induces endoplasmic reticulum stress-mediated apoptosis via toll-like receptor 2/4.</title>
        <authorList>
            <person name="Lim Y.J."/>
            <person name="Choi J.A."/>
            <person name="Lee J.H."/>
            <person name="Choi C.H."/>
            <person name="Kim H.J."/>
            <person name="Song C.H."/>
        </authorList>
    </citation>
    <scope>FUNCTION IN INFECTION</scope>
    <source>
        <strain>ATCC 27294 / TMC 102 / H37Rv</strain>
    </source>
</reference>
<reference key="16">
    <citation type="journal article" date="2010" name="Nat. Rev. Microbiol.">
        <title>Regulation of antigen presentation by Mycobacterium tuberculosis: a role for Toll-like receptors.</title>
        <authorList>
            <person name="Harding C.V."/>
            <person name="Boom W.H."/>
        </authorList>
    </citation>
    <scope>REVIEW</scope>
</reference>
<reference key="17">
    <citation type="journal article" date="2003" name="Structure">
        <title>Crystal structure of M tuberculosis ABC phosphate transport receptor: specificity and charge compensation dominated by ion-dipole interactions.</title>
        <authorList>
            <person name="Vyas N.K."/>
            <person name="Vyas M.N."/>
            <person name="Quiocho F.A."/>
        </authorList>
    </citation>
    <scope>X-RAY CRYSTALLOGRAPHY (2.16 ANGSTROMS) OF 25-374 IN COMPLEX WITH PHOSPHATE</scope>
    <source>
        <strain>H37Rv</strain>
    </source>
</reference>
<accession>P9WGU1</accession>
<accession>L0T854</accession>
<accession>O05868</accession>
<accession>P15712</accession>
<feature type="signal peptide" evidence="1">
    <location>
        <begin position="1"/>
        <end position="23"/>
    </location>
</feature>
<feature type="chain" id="PRO_0000031854" description="Phosphate-binding protein PstS 1">
    <location>
        <begin position="24"/>
        <end position="374"/>
    </location>
</feature>
<feature type="region of interest" description="Disordered" evidence="2">
    <location>
        <begin position="25"/>
        <end position="48"/>
    </location>
</feature>
<feature type="binding site" evidence="4">
    <location>
        <begin position="58"/>
        <end position="60"/>
    </location>
    <ligand>
        <name>phosphate</name>
        <dbReference type="ChEBI" id="CHEBI:43474"/>
    </ligand>
</feature>
<feature type="binding site" evidence="4">
    <location>
        <position position="88"/>
    </location>
    <ligand>
        <name>phosphate</name>
        <dbReference type="ChEBI" id="CHEBI:43474"/>
    </ligand>
</feature>
<feature type="binding site" evidence="4">
    <location>
        <position position="106"/>
    </location>
    <ligand>
        <name>phosphate</name>
        <dbReference type="ChEBI" id="CHEBI:43474"/>
    </ligand>
</feature>
<feature type="binding site" evidence="4">
    <location>
        <begin position="185"/>
        <end position="191"/>
    </location>
    <ligand>
        <name>phosphate</name>
        <dbReference type="ChEBI" id="CHEBI:43474"/>
    </ligand>
</feature>
<feature type="lipid moiety-binding region" description="N-palmitoyl cysteine" evidence="1 22">
    <location>
        <position position="24"/>
    </location>
</feature>
<feature type="lipid moiety-binding region" description="S-diacylglycerol cysteine" evidence="1">
    <location>
        <position position="24"/>
    </location>
</feature>
<feature type="strand" evidence="23">
    <location>
        <begin position="51"/>
        <end position="57"/>
    </location>
</feature>
<feature type="turn" evidence="23">
    <location>
        <begin position="59"/>
        <end position="61"/>
    </location>
</feature>
<feature type="helix" evidence="23">
    <location>
        <begin position="62"/>
        <end position="75"/>
    </location>
</feature>
<feature type="strand" evidence="23">
    <location>
        <begin position="79"/>
        <end position="82"/>
    </location>
</feature>
<feature type="helix" evidence="23">
    <location>
        <begin position="88"/>
        <end position="97"/>
    </location>
</feature>
<feature type="strand" evidence="23">
    <location>
        <begin position="99"/>
        <end position="107"/>
    </location>
</feature>
<feature type="helix" evidence="23">
    <location>
        <begin position="111"/>
        <end position="116"/>
    </location>
</feature>
<feature type="strand" evidence="23">
    <location>
        <begin position="120"/>
        <end position="134"/>
    </location>
</feature>
<feature type="helix" evidence="23">
    <location>
        <begin position="147"/>
        <end position="154"/>
    </location>
</feature>
<feature type="helix" evidence="23">
    <location>
        <begin position="164"/>
        <end position="167"/>
    </location>
</feature>
<feature type="strand" evidence="23">
    <location>
        <begin position="181"/>
        <end position="187"/>
    </location>
</feature>
<feature type="helix" evidence="23">
    <location>
        <begin position="190"/>
        <end position="202"/>
    </location>
</feature>
<feature type="turn" evidence="23">
    <location>
        <begin position="204"/>
        <end position="211"/>
    </location>
</feature>
<feature type="strand" evidence="23">
    <location>
        <begin position="214"/>
        <end position="216"/>
    </location>
</feature>
<feature type="strand" evidence="23">
    <location>
        <begin position="226"/>
        <end position="229"/>
    </location>
</feature>
<feature type="helix" evidence="23">
    <location>
        <begin position="230"/>
        <end position="240"/>
    </location>
</feature>
<feature type="strand" evidence="23">
    <location>
        <begin position="244"/>
        <end position="249"/>
    </location>
</feature>
<feature type="helix" evidence="23">
    <location>
        <begin position="250"/>
        <end position="252"/>
    </location>
</feature>
<feature type="helix" evidence="23">
    <location>
        <begin position="253"/>
        <end position="258"/>
    </location>
</feature>
<feature type="strand" evidence="23">
    <location>
        <begin position="265"/>
        <end position="267"/>
    </location>
</feature>
<feature type="helix" evidence="23">
    <location>
        <begin position="278"/>
        <end position="288"/>
    </location>
</feature>
<feature type="turn" evidence="23">
    <location>
        <begin position="289"/>
        <end position="291"/>
    </location>
</feature>
<feature type="strand" evidence="23">
    <location>
        <begin position="310"/>
        <end position="322"/>
    </location>
</feature>
<feature type="helix" evidence="23">
    <location>
        <begin position="326"/>
        <end position="340"/>
    </location>
</feature>
<feature type="helix" evidence="23">
    <location>
        <begin position="342"/>
        <end position="344"/>
    </location>
</feature>
<feature type="helix" evidence="23">
    <location>
        <begin position="346"/>
        <end position="349"/>
    </location>
</feature>
<feature type="turn" evidence="23">
    <location>
        <begin position="350"/>
        <end position="353"/>
    </location>
</feature>
<feature type="helix" evidence="23">
    <location>
        <begin position="359"/>
        <end position="369"/>
    </location>
</feature>
<organism>
    <name type="scientific">Mycobacterium tuberculosis (strain ATCC 25618 / H37Rv)</name>
    <dbReference type="NCBI Taxonomy" id="83332"/>
    <lineage>
        <taxon>Bacteria</taxon>
        <taxon>Bacillati</taxon>
        <taxon>Actinomycetota</taxon>
        <taxon>Actinomycetes</taxon>
        <taxon>Mycobacteriales</taxon>
        <taxon>Mycobacteriaceae</taxon>
        <taxon>Mycobacterium</taxon>
        <taxon>Mycobacterium tuberculosis complex</taxon>
    </lineage>
</organism>
<protein>
    <recommendedName>
        <fullName>Phosphate-binding protein PstS 1</fullName>
        <shortName>PBP 1</shortName>
        <shortName evidence="18">PhoS1</shortName>
        <shortName>PstS-1</shortName>
    </recommendedName>
    <alternativeName>
        <fullName evidence="16">38-kDa glycolipoprotein</fullName>
    </alternativeName>
    <alternativeName>
        <fullName evidence="17">38-kDa lipoprotein</fullName>
        <shortName>P38</shortName>
    </alternativeName>
    <alternativeName>
        <fullName>Antigen Ag78</fullName>
    </alternativeName>
    <alternativeName>
        <fullName evidence="19">Protein antigen B</fullName>
        <shortName evidence="19">Pab</shortName>
    </alternativeName>
</protein>
<proteinExistence type="evidence at protein level"/>
<keyword id="KW-0002">3D-structure</keyword>
<keyword id="KW-0130">Cell adhesion</keyword>
<keyword id="KW-1003">Cell membrane</keyword>
<keyword id="KW-0134">Cell wall</keyword>
<keyword id="KW-0325">Glycoprotein</keyword>
<keyword id="KW-0449">Lipoprotein</keyword>
<keyword id="KW-0472">Membrane</keyword>
<keyword id="KW-0564">Palmitate</keyword>
<keyword id="KW-0592">Phosphate transport</keyword>
<keyword id="KW-1185">Reference proteome</keyword>
<keyword id="KW-0964">Secreted</keyword>
<keyword id="KW-0732">Signal</keyword>
<keyword id="KW-0813">Transport</keyword>
<keyword id="KW-0843">Virulence</keyword>